<keyword id="KW-0238">DNA-binding</keyword>
<keyword id="KW-0479">Metal-binding</keyword>
<keyword id="KW-0539">Nucleus</keyword>
<keyword id="KW-0597">Phosphoprotein</keyword>
<keyword id="KW-1185">Reference proteome</keyword>
<keyword id="KW-0677">Repeat</keyword>
<keyword id="KW-0678">Repressor</keyword>
<keyword id="KW-0804">Transcription</keyword>
<keyword id="KW-0805">Transcription regulation</keyword>
<keyword id="KW-0862">Zinc</keyword>
<keyword id="KW-0863">Zinc-finger</keyword>
<evidence type="ECO:0000255" key="1">
    <source>
        <dbReference type="PROSITE-ProRule" id="PRU00042"/>
    </source>
</evidence>
<evidence type="ECO:0000269" key="2">
    <source>
    </source>
</evidence>
<evidence type="ECO:0000305" key="3"/>
<evidence type="ECO:0007744" key="4">
    <source>
    </source>
</evidence>
<evidence type="ECO:0007744" key="5">
    <source>
    </source>
</evidence>
<proteinExistence type="evidence at protein level"/>
<gene>
    <name type="primary">NRG1</name>
    <name type="synonym">MSS1</name>
    <name type="ordered locus">YDR043C</name>
    <name type="ORF">YD5112.01C</name>
</gene>
<reference key="1">
    <citation type="submission" date="1997-07" db="EMBL/GenBank/DDBJ databases">
        <title>MSS1 gene, encoding a zinc-finger motif, is involved in glucose repression and STA10 repression of glucoamylase gene in Saccharomyces cerevisiae.</title>
        <authorList>
            <person name="Park S.H."/>
            <person name="Hwang H.J."/>
            <person name="Kang H.S."/>
        </authorList>
    </citation>
    <scope>NUCLEOTIDE SEQUENCE [GENOMIC DNA]</scope>
    <source>
        <strain>AN20-5B</strain>
    </source>
</reference>
<reference key="2">
    <citation type="journal article" date="1997" name="Nature">
        <title>The nucleotide sequence of Saccharomyces cerevisiae chromosome IV.</title>
        <authorList>
            <person name="Jacq C."/>
            <person name="Alt-Moerbe J."/>
            <person name="Andre B."/>
            <person name="Arnold W."/>
            <person name="Bahr A."/>
            <person name="Ballesta J.P.G."/>
            <person name="Bargues M."/>
            <person name="Baron L."/>
            <person name="Becker A."/>
            <person name="Biteau N."/>
            <person name="Bloecker H."/>
            <person name="Blugeon C."/>
            <person name="Boskovic J."/>
            <person name="Brandt P."/>
            <person name="Brueckner M."/>
            <person name="Buitrago M.J."/>
            <person name="Coster F."/>
            <person name="Delaveau T."/>
            <person name="del Rey F."/>
            <person name="Dujon B."/>
            <person name="Eide L.G."/>
            <person name="Garcia-Cantalejo J.M."/>
            <person name="Goffeau A."/>
            <person name="Gomez-Peris A."/>
            <person name="Granotier C."/>
            <person name="Hanemann V."/>
            <person name="Hankeln T."/>
            <person name="Hoheisel J.D."/>
            <person name="Jaeger W."/>
            <person name="Jimenez A."/>
            <person name="Jonniaux J.-L."/>
            <person name="Kraemer C."/>
            <person name="Kuester H."/>
            <person name="Laamanen P."/>
            <person name="Legros Y."/>
            <person name="Louis E.J."/>
            <person name="Moeller-Rieker S."/>
            <person name="Monnet A."/>
            <person name="Moro M."/>
            <person name="Mueller-Auer S."/>
            <person name="Nussbaumer B."/>
            <person name="Paricio N."/>
            <person name="Paulin L."/>
            <person name="Perea J."/>
            <person name="Perez-Alonso M."/>
            <person name="Perez-Ortin J.E."/>
            <person name="Pohl T.M."/>
            <person name="Prydz H."/>
            <person name="Purnelle B."/>
            <person name="Rasmussen S.W."/>
            <person name="Remacha M.A."/>
            <person name="Revuelta J.L."/>
            <person name="Rieger M."/>
            <person name="Salom D."/>
            <person name="Saluz H.P."/>
            <person name="Saiz J.E."/>
            <person name="Saren A.-M."/>
            <person name="Schaefer M."/>
            <person name="Scharfe M."/>
            <person name="Schmidt E.R."/>
            <person name="Schneider C."/>
            <person name="Scholler P."/>
            <person name="Schwarz S."/>
            <person name="Soler-Mira A."/>
            <person name="Urrestarazu L.A."/>
            <person name="Verhasselt P."/>
            <person name="Vissers S."/>
            <person name="Voet M."/>
            <person name="Volckaert G."/>
            <person name="Wagner G."/>
            <person name="Wambutt R."/>
            <person name="Wedler E."/>
            <person name="Wedler H."/>
            <person name="Woelfl S."/>
            <person name="Harris D.E."/>
            <person name="Bowman S."/>
            <person name="Brown D."/>
            <person name="Churcher C.M."/>
            <person name="Connor R."/>
            <person name="Dedman K."/>
            <person name="Gentles S."/>
            <person name="Hamlin N."/>
            <person name="Hunt S."/>
            <person name="Jones L."/>
            <person name="McDonald S."/>
            <person name="Murphy L.D."/>
            <person name="Niblett D."/>
            <person name="Odell C."/>
            <person name="Oliver K."/>
            <person name="Rajandream M.A."/>
            <person name="Richards C."/>
            <person name="Shore L."/>
            <person name="Walsh S.V."/>
            <person name="Barrell B.G."/>
            <person name="Dietrich F.S."/>
            <person name="Mulligan J.T."/>
            <person name="Allen E."/>
            <person name="Araujo R."/>
            <person name="Aviles E."/>
            <person name="Berno A."/>
            <person name="Carpenter J."/>
            <person name="Chen E."/>
            <person name="Cherry J.M."/>
            <person name="Chung E."/>
            <person name="Duncan M."/>
            <person name="Hunicke-Smith S."/>
            <person name="Hyman R.W."/>
            <person name="Komp C."/>
            <person name="Lashkari D."/>
            <person name="Lew H."/>
            <person name="Lin D."/>
            <person name="Mosedale D."/>
            <person name="Nakahara K."/>
            <person name="Namath A."/>
            <person name="Oefner P."/>
            <person name="Oh C."/>
            <person name="Petel F.X."/>
            <person name="Roberts D."/>
            <person name="Schramm S."/>
            <person name="Schroeder M."/>
            <person name="Shogren T."/>
            <person name="Shroff N."/>
            <person name="Winant A."/>
            <person name="Yelton M.A."/>
            <person name="Botstein D."/>
            <person name="Davis R.W."/>
            <person name="Johnston M."/>
            <person name="Andrews S."/>
            <person name="Brinkman R."/>
            <person name="Cooper J."/>
            <person name="Ding H."/>
            <person name="Du Z."/>
            <person name="Favello A."/>
            <person name="Fulton L."/>
            <person name="Gattung S."/>
            <person name="Greco T."/>
            <person name="Hallsworth K."/>
            <person name="Hawkins J."/>
            <person name="Hillier L.W."/>
            <person name="Jier M."/>
            <person name="Johnson D."/>
            <person name="Johnston L."/>
            <person name="Kirsten J."/>
            <person name="Kucaba T."/>
            <person name="Langston Y."/>
            <person name="Latreille P."/>
            <person name="Le T."/>
            <person name="Mardis E."/>
            <person name="Menezes S."/>
            <person name="Miller N."/>
            <person name="Nhan M."/>
            <person name="Pauley A."/>
            <person name="Peluso D."/>
            <person name="Rifkin L."/>
            <person name="Riles L."/>
            <person name="Taich A."/>
            <person name="Trevaskis E."/>
            <person name="Vignati D."/>
            <person name="Wilcox L."/>
            <person name="Wohldman P."/>
            <person name="Vaudin M."/>
            <person name="Wilson R."/>
            <person name="Waterston R."/>
            <person name="Albermann K."/>
            <person name="Hani J."/>
            <person name="Heumann K."/>
            <person name="Kleine K."/>
            <person name="Mewes H.-W."/>
            <person name="Zollner A."/>
            <person name="Zaccaria P."/>
        </authorList>
    </citation>
    <scope>NUCLEOTIDE SEQUENCE [LARGE SCALE GENOMIC DNA]</scope>
    <source>
        <strain>ATCC 204508 / S288c</strain>
    </source>
</reference>
<reference key="3">
    <citation type="journal article" date="2014" name="G3 (Bethesda)">
        <title>The reference genome sequence of Saccharomyces cerevisiae: Then and now.</title>
        <authorList>
            <person name="Engel S.R."/>
            <person name="Dietrich F.S."/>
            <person name="Fisk D.G."/>
            <person name="Binkley G."/>
            <person name="Balakrishnan R."/>
            <person name="Costanzo M.C."/>
            <person name="Dwight S.S."/>
            <person name="Hitz B.C."/>
            <person name="Karra K."/>
            <person name="Nash R.S."/>
            <person name="Weng S."/>
            <person name="Wong E.D."/>
            <person name="Lloyd P."/>
            <person name="Skrzypek M.S."/>
            <person name="Miyasato S.R."/>
            <person name="Simison M."/>
            <person name="Cherry J.M."/>
        </authorList>
    </citation>
    <scope>GENOME REANNOTATION</scope>
    <source>
        <strain>ATCC 204508 / S288c</strain>
    </source>
</reference>
<reference key="4">
    <citation type="journal article" date="2007" name="Genome Res.">
        <title>Approaching a complete repository of sequence-verified protein-encoding clones for Saccharomyces cerevisiae.</title>
        <authorList>
            <person name="Hu Y."/>
            <person name="Rolfs A."/>
            <person name="Bhullar B."/>
            <person name="Murthy T.V.S."/>
            <person name="Zhu C."/>
            <person name="Berger M.F."/>
            <person name="Camargo A.A."/>
            <person name="Kelley F."/>
            <person name="McCarron S."/>
            <person name="Jepson D."/>
            <person name="Richardson A."/>
            <person name="Raphael J."/>
            <person name="Moreira D."/>
            <person name="Taycher E."/>
            <person name="Zuo D."/>
            <person name="Mohr S."/>
            <person name="Kane M.F."/>
            <person name="Williamson J."/>
            <person name="Simpson A.J.G."/>
            <person name="Bulyk M.L."/>
            <person name="Harlow E."/>
            <person name="Marsischky G."/>
            <person name="Kolodner R.D."/>
            <person name="LaBaer J."/>
        </authorList>
    </citation>
    <scope>NUCLEOTIDE SEQUENCE [GENOMIC DNA]</scope>
    <source>
        <strain>ATCC 204508 / S288c</strain>
    </source>
</reference>
<reference key="5">
    <citation type="journal article" date="2003" name="Nature">
        <title>Global analysis of protein expression in yeast.</title>
        <authorList>
            <person name="Ghaemmaghami S."/>
            <person name="Huh W.-K."/>
            <person name="Bower K."/>
            <person name="Howson R.W."/>
            <person name="Belle A."/>
            <person name="Dephoure N."/>
            <person name="O'Shea E.K."/>
            <person name="Weissman J.S."/>
        </authorList>
    </citation>
    <scope>LEVEL OF PROTEIN EXPRESSION [LARGE SCALE ANALYSIS]</scope>
</reference>
<reference key="6">
    <citation type="journal article" date="2008" name="Mol. Cell. Proteomics">
        <title>A multidimensional chromatography technology for in-depth phosphoproteome analysis.</title>
        <authorList>
            <person name="Albuquerque C.P."/>
            <person name="Smolka M.B."/>
            <person name="Payne S.H."/>
            <person name="Bafna V."/>
            <person name="Eng J."/>
            <person name="Zhou H."/>
        </authorList>
    </citation>
    <scope>PHOSPHORYLATION [LARGE SCALE ANALYSIS] AT SER-163</scope>
    <scope>IDENTIFICATION BY MASS SPECTROMETRY [LARGE SCALE ANALYSIS]</scope>
</reference>
<reference key="7">
    <citation type="journal article" date="2009" name="Science">
        <title>Global analysis of Cdk1 substrate phosphorylation sites provides insights into evolution.</title>
        <authorList>
            <person name="Holt L.J."/>
            <person name="Tuch B.B."/>
            <person name="Villen J."/>
            <person name="Johnson A.D."/>
            <person name="Gygi S.P."/>
            <person name="Morgan D.O."/>
        </authorList>
    </citation>
    <scope>PHOSPHORYLATION [LARGE SCALE ANALYSIS] AT SER-163</scope>
    <scope>IDENTIFICATION BY MASS SPECTROMETRY [LARGE SCALE ANALYSIS]</scope>
</reference>
<comment type="function">
    <text>Transcriptional repressor involved in regulation of glucose repression. Binds to UAS-1 in the STA1 promoter.</text>
</comment>
<comment type="subcellular location">
    <subcellularLocation>
        <location evidence="3">Nucleus</location>
    </subcellularLocation>
</comment>
<comment type="miscellaneous">
    <text evidence="2">Present with 556 molecules/cell in log phase SD medium.</text>
</comment>
<feature type="chain" id="PRO_0000046812" description="Transcriptional regulator NRG1">
    <location>
        <begin position="1"/>
        <end position="231"/>
    </location>
</feature>
<feature type="zinc finger region" description="C2H2-type 1" evidence="1">
    <location>
        <begin position="174"/>
        <end position="196"/>
    </location>
</feature>
<feature type="zinc finger region" description="C2H2-type 2" evidence="1">
    <location>
        <begin position="202"/>
        <end position="226"/>
    </location>
</feature>
<feature type="modified residue" description="Phosphoserine" evidence="4 5">
    <location>
        <position position="163"/>
    </location>
</feature>
<organism>
    <name type="scientific">Saccharomyces cerevisiae (strain ATCC 204508 / S288c)</name>
    <name type="common">Baker's yeast</name>
    <dbReference type="NCBI Taxonomy" id="559292"/>
    <lineage>
        <taxon>Eukaryota</taxon>
        <taxon>Fungi</taxon>
        <taxon>Dikarya</taxon>
        <taxon>Ascomycota</taxon>
        <taxon>Saccharomycotina</taxon>
        <taxon>Saccharomycetes</taxon>
        <taxon>Saccharomycetales</taxon>
        <taxon>Saccharomycetaceae</taxon>
        <taxon>Saccharomyces</taxon>
    </lineage>
</organism>
<dbReference type="EMBL" id="AF013167">
    <property type="protein sequence ID" value="AAD01510.1"/>
    <property type="molecule type" value="Genomic_DNA"/>
</dbReference>
<dbReference type="EMBL" id="Z49812">
    <property type="protein sequence ID" value="CAA89965.1"/>
    <property type="molecule type" value="Genomic_DNA"/>
</dbReference>
<dbReference type="EMBL" id="AY557653">
    <property type="protein sequence ID" value="AAS55979.1"/>
    <property type="molecule type" value="Genomic_DNA"/>
</dbReference>
<dbReference type="EMBL" id="BK006938">
    <property type="protein sequence ID" value="DAA11891.1"/>
    <property type="molecule type" value="Genomic_DNA"/>
</dbReference>
<dbReference type="PIR" id="S55078">
    <property type="entry name" value="S55078"/>
</dbReference>
<dbReference type="RefSeq" id="NP_010328.3">
    <property type="nucleotide sequence ID" value="NM_001180351.3"/>
</dbReference>
<dbReference type="SMR" id="Q03125"/>
<dbReference type="BioGRID" id="32098">
    <property type="interactions" value="242"/>
</dbReference>
<dbReference type="DIP" id="DIP-2434N"/>
<dbReference type="FunCoup" id="Q03125">
    <property type="interactions" value="636"/>
</dbReference>
<dbReference type="MINT" id="Q03125"/>
<dbReference type="STRING" id="4932.YDR043C"/>
<dbReference type="iPTMnet" id="Q03125"/>
<dbReference type="PaxDb" id="4932-YDR043C"/>
<dbReference type="PeptideAtlas" id="Q03125"/>
<dbReference type="EnsemblFungi" id="YDR043C_mRNA">
    <property type="protein sequence ID" value="YDR043C"/>
    <property type="gene ID" value="YDR043C"/>
</dbReference>
<dbReference type="GeneID" id="851613"/>
<dbReference type="KEGG" id="sce:YDR043C"/>
<dbReference type="AGR" id="SGD:S000002450"/>
<dbReference type="SGD" id="S000002450">
    <property type="gene designation" value="NRG1"/>
</dbReference>
<dbReference type="VEuPathDB" id="FungiDB:YDR043C"/>
<dbReference type="eggNOG" id="KOG1721">
    <property type="taxonomic scope" value="Eukaryota"/>
</dbReference>
<dbReference type="GeneTree" id="ENSGT00940000176508"/>
<dbReference type="HOGENOM" id="CLU_082791_0_0_1"/>
<dbReference type="InParanoid" id="Q03125"/>
<dbReference type="OMA" id="TREYKCH"/>
<dbReference type="OrthoDB" id="6365676at2759"/>
<dbReference type="BioCyc" id="YEAST:G3O-29657-MONOMER"/>
<dbReference type="Reactome" id="R-SCE-9018519">
    <property type="pathway name" value="Estrogen-dependent gene expression"/>
</dbReference>
<dbReference type="BioGRID-ORCS" id="851613">
    <property type="hits" value="1 hit in 13 CRISPR screens"/>
</dbReference>
<dbReference type="PRO" id="PR:Q03125"/>
<dbReference type="Proteomes" id="UP000002311">
    <property type="component" value="Chromosome IV"/>
</dbReference>
<dbReference type="RNAct" id="Q03125">
    <property type="molecule type" value="protein"/>
</dbReference>
<dbReference type="GO" id="GO:0000785">
    <property type="term" value="C:chromatin"/>
    <property type="evidence" value="ECO:0000318"/>
    <property type="project" value="GO_Central"/>
</dbReference>
<dbReference type="GO" id="GO:0005634">
    <property type="term" value="C:nucleus"/>
    <property type="evidence" value="ECO:0000314"/>
    <property type="project" value="SGD"/>
</dbReference>
<dbReference type="GO" id="GO:0005667">
    <property type="term" value="C:transcription regulator complex"/>
    <property type="evidence" value="ECO:0000318"/>
    <property type="project" value="GO_Central"/>
</dbReference>
<dbReference type="GO" id="GO:0000981">
    <property type="term" value="F:DNA-binding transcription factor activity, RNA polymerase II-specific"/>
    <property type="evidence" value="ECO:0000318"/>
    <property type="project" value="GO_Central"/>
</dbReference>
<dbReference type="GO" id="GO:0001227">
    <property type="term" value="F:DNA-binding transcription repressor activity, RNA polymerase II-specific"/>
    <property type="evidence" value="ECO:0000314"/>
    <property type="project" value="SGD"/>
</dbReference>
<dbReference type="GO" id="GO:0000978">
    <property type="term" value="F:RNA polymerase II cis-regulatory region sequence-specific DNA binding"/>
    <property type="evidence" value="ECO:0000314"/>
    <property type="project" value="SGD"/>
</dbReference>
<dbReference type="GO" id="GO:0061629">
    <property type="term" value="F:RNA polymerase II-specific DNA-binding transcription factor binding"/>
    <property type="evidence" value="ECO:0000353"/>
    <property type="project" value="SGD"/>
</dbReference>
<dbReference type="GO" id="GO:0008270">
    <property type="term" value="F:zinc ion binding"/>
    <property type="evidence" value="ECO:0007669"/>
    <property type="project" value="UniProtKB-KW"/>
</dbReference>
<dbReference type="GO" id="GO:0043709">
    <property type="term" value="P:cell adhesion involved in single-species biofilm formation"/>
    <property type="evidence" value="ECO:0000316"/>
    <property type="project" value="SGD"/>
</dbReference>
<dbReference type="GO" id="GO:0071475">
    <property type="term" value="P:cellular hyperosmotic salinity response"/>
    <property type="evidence" value="ECO:0000315"/>
    <property type="project" value="SGD"/>
</dbReference>
<dbReference type="GO" id="GO:2000218">
    <property type="term" value="P:negative regulation of invasive growth in response to glucose limitation"/>
    <property type="evidence" value="ECO:0000316"/>
    <property type="project" value="SGD"/>
</dbReference>
<dbReference type="GO" id="GO:2000221">
    <property type="term" value="P:negative regulation of pseudohyphal growth"/>
    <property type="evidence" value="ECO:0000316"/>
    <property type="project" value="SGD"/>
</dbReference>
<dbReference type="GO" id="GO:0000122">
    <property type="term" value="P:negative regulation of transcription by RNA polymerase II"/>
    <property type="evidence" value="ECO:0000315"/>
    <property type="project" value="SGD"/>
</dbReference>
<dbReference type="GO" id="GO:0006357">
    <property type="term" value="P:regulation of transcription by RNA polymerase II"/>
    <property type="evidence" value="ECO:0000318"/>
    <property type="project" value="GO_Central"/>
</dbReference>
<dbReference type="GO" id="GO:0090606">
    <property type="term" value="P:single-species surface biofilm formation"/>
    <property type="evidence" value="ECO:0000315"/>
    <property type="project" value="SGD"/>
</dbReference>
<dbReference type="FunFam" id="3.30.160.60:FF:002263">
    <property type="entry name" value="Nrg1p"/>
    <property type="match status" value="1"/>
</dbReference>
<dbReference type="FunFam" id="3.30.160.60:FF:001382">
    <property type="entry name" value="Transcriptional repressor"/>
    <property type="match status" value="1"/>
</dbReference>
<dbReference type="Gene3D" id="3.30.160.60">
    <property type="entry name" value="Classic Zinc Finger"/>
    <property type="match status" value="2"/>
</dbReference>
<dbReference type="InterPro" id="IPR036236">
    <property type="entry name" value="Znf_C2H2_sf"/>
</dbReference>
<dbReference type="InterPro" id="IPR013087">
    <property type="entry name" value="Znf_C2H2_type"/>
</dbReference>
<dbReference type="PANTHER" id="PTHR14003">
    <property type="entry name" value="TRANSCRIPTIONAL REPRESSOR PROTEIN YY"/>
    <property type="match status" value="1"/>
</dbReference>
<dbReference type="PANTHER" id="PTHR14003:SF19">
    <property type="entry name" value="YY2 TRANSCRIPTION FACTOR"/>
    <property type="match status" value="1"/>
</dbReference>
<dbReference type="SMART" id="SM00355">
    <property type="entry name" value="ZnF_C2H2"/>
    <property type="match status" value="2"/>
</dbReference>
<dbReference type="SUPFAM" id="SSF57667">
    <property type="entry name" value="beta-beta-alpha zinc fingers"/>
    <property type="match status" value="1"/>
</dbReference>
<dbReference type="PROSITE" id="PS00028">
    <property type="entry name" value="ZINC_FINGER_C2H2_1"/>
    <property type="match status" value="2"/>
</dbReference>
<dbReference type="PROSITE" id="PS50157">
    <property type="entry name" value="ZINC_FINGER_C2H2_2"/>
    <property type="match status" value="1"/>
</dbReference>
<sequence length="231" mass="26743">MFYPYNYSNLNVSTMPALPGISAFDGMQDEENVEISPERKYQTLLPVLTNSHVVENELKHKLNKTAFDFRYQTKSENGSEKWEPKYLITPNLQTRSVSFDNSSVQYNSDSSEKSSLSQLTCNSSIIQQPENGIVSNDAYNKMANSRYSLKTRKQRTDPRNTLSDEEDLEQRRKYICKICARGFTTSGHLARHNRIHTGEKNHCCPYKGCTQRFSRHDNCLQHYRTHLKKGQ</sequence>
<accession>Q03125</accession>
<accession>D6VS31</accession>
<protein>
    <recommendedName>
        <fullName>Transcriptional regulator NRG1</fullName>
    </recommendedName>
    <alternativeName>
        <fullName>Zinc finger protein MSS1</fullName>
    </alternativeName>
</protein>
<name>NRG1_YEAST</name>